<sequence length="64" mass="6944">MAQEQTKRGGGGGDDDDIAGSTAAGQERREKLTEETDDLLDEIDDVLEENAEDFVRAYVQKGGQ</sequence>
<organism>
    <name type="scientific">Mycobacterium tuberculosis (strain ATCC 25177 / H37Ra)</name>
    <dbReference type="NCBI Taxonomy" id="419947"/>
    <lineage>
        <taxon>Bacteria</taxon>
        <taxon>Bacillati</taxon>
        <taxon>Actinomycetota</taxon>
        <taxon>Actinomycetes</taxon>
        <taxon>Mycobacteriales</taxon>
        <taxon>Mycobacteriaceae</taxon>
        <taxon>Mycobacterium</taxon>
        <taxon>Mycobacterium tuberculosis complex</taxon>
    </lineage>
</organism>
<keyword id="KW-0175">Coiled coil</keyword>
<keyword id="KW-1017">Isopeptide bond</keyword>
<keyword id="KW-1185">Reference proteome</keyword>
<keyword id="KW-0833">Ubl conjugation pathway</keyword>
<comment type="function">
    <text evidence="1">Protein modifier that is covalently attached to lysine residues of substrate proteins, thereby targeting them for proteasomal degradation. The tagging system is termed pupylation.</text>
</comment>
<comment type="pathway">
    <text evidence="1">Protein degradation; proteasomal Pup-dependent pathway.</text>
</comment>
<comment type="subunit">
    <text evidence="1">Strongly interacts with the proteasome-associated ATPase ARC through a hydrophobic interface; the interacting region of Pup lies in its C-terminal half. There is one Pup binding site per ARC hexamer ring.</text>
</comment>
<comment type="domain">
    <text evidence="1">The N-terminal unstructured half of Pup provides a signal required to initiate unfolding and degradation by the proteasome but is not needed for pupylation, while the C-terminal helical half of Pup interacts with ARC to target proteins to the proteasome.</text>
</comment>
<comment type="PTM">
    <text evidence="1">Is modified by deamidation of its C-terminal glutamine to glutamate by the deamidase Dop, a prerequisite to the subsequent pupylation process.</text>
</comment>
<comment type="similarity">
    <text evidence="1">Belongs to the prokaryotic ubiquitin-like protein family.</text>
</comment>
<gene>
    <name evidence="1" type="primary">pup</name>
    <name type="ordered locus">MRA_2126</name>
</gene>
<proteinExistence type="inferred from homology"/>
<accession>A5U4D7</accession>
<feature type="chain" id="PRO_0000390598" description="Prokaryotic ubiquitin-like protein Pup">
    <location>
        <begin position="1"/>
        <end position="64"/>
    </location>
</feature>
<feature type="region of interest" description="Disordered" evidence="2">
    <location>
        <begin position="1"/>
        <end position="37"/>
    </location>
</feature>
<feature type="region of interest" description="ARC ATPase binding" evidence="1">
    <location>
        <begin position="21"/>
        <end position="58"/>
    </location>
</feature>
<feature type="coiled-coil region" evidence="1">
    <location>
        <begin position="23"/>
        <end position="52"/>
    </location>
</feature>
<feature type="modified residue" description="Deamidated glutamine" evidence="1">
    <location>
        <position position="64"/>
    </location>
</feature>
<feature type="cross-link" description="Isoglutamyl lysine isopeptide (Gln-Lys) (interchain with K-? in acceptor proteins)" evidence="1">
    <location>
        <position position="64"/>
    </location>
</feature>
<evidence type="ECO:0000255" key="1">
    <source>
        <dbReference type="HAMAP-Rule" id="MF_02106"/>
    </source>
</evidence>
<evidence type="ECO:0000256" key="2">
    <source>
        <dbReference type="SAM" id="MobiDB-lite"/>
    </source>
</evidence>
<dbReference type="EMBL" id="CP000611">
    <property type="protein sequence ID" value="ABQ73887.1"/>
    <property type="molecule type" value="Genomic_DNA"/>
</dbReference>
<dbReference type="RefSeq" id="WP_003411026.1">
    <property type="nucleotide sequence ID" value="NZ_CP016972.1"/>
</dbReference>
<dbReference type="SMR" id="A5U4D7"/>
<dbReference type="KEGG" id="mra:MRA_2126"/>
<dbReference type="eggNOG" id="ENOG50333JS">
    <property type="taxonomic scope" value="Bacteria"/>
</dbReference>
<dbReference type="HOGENOM" id="CLU_183816_1_0_11"/>
<dbReference type="UniPathway" id="UPA00997"/>
<dbReference type="Proteomes" id="UP000001988">
    <property type="component" value="Chromosome"/>
</dbReference>
<dbReference type="GO" id="GO:0070628">
    <property type="term" value="F:proteasome binding"/>
    <property type="evidence" value="ECO:0007669"/>
    <property type="project" value="UniProtKB-UniRule"/>
</dbReference>
<dbReference type="GO" id="GO:0031386">
    <property type="term" value="F:protein tag activity"/>
    <property type="evidence" value="ECO:0007669"/>
    <property type="project" value="UniProtKB-UniRule"/>
</dbReference>
<dbReference type="GO" id="GO:0019941">
    <property type="term" value="P:modification-dependent protein catabolic process"/>
    <property type="evidence" value="ECO:0007669"/>
    <property type="project" value="UniProtKB-UniRule"/>
</dbReference>
<dbReference type="GO" id="GO:0010498">
    <property type="term" value="P:proteasomal protein catabolic process"/>
    <property type="evidence" value="ECO:0007669"/>
    <property type="project" value="UniProtKB-UniRule"/>
</dbReference>
<dbReference type="GO" id="GO:0070490">
    <property type="term" value="P:protein pupylation"/>
    <property type="evidence" value="ECO:0007669"/>
    <property type="project" value="UniProtKB-UniRule"/>
</dbReference>
<dbReference type="HAMAP" id="MF_02106">
    <property type="entry name" value="Pup"/>
    <property type="match status" value="1"/>
</dbReference>
<dbReference type="InterPro" id="IPR008515">
    <property type="entry name" value="Ubiquitin-like_Pup"/>
</dbReference>
<dbReference type="NCBIfam" id="TIGR03687">
    <property type="entry name" value="pupylate_cterm"/>
    <property type="match status" value="1"/>
</dbReference>
<dbReference type="Pfam" id="PF05639">
    <property type="entry name" value="Pup"/>
    <property type="match status" value="1"/>
</dbReference>
<reference key="1">
    <citation type="journal article" date="2008" name="PLoS ONE">
        <title>Genetic basis of virulence attenuation revealed by comparative genomic analysis of Mycobacterium tuberculosis strain H37Ra versus H37Rv.</title>
        <authorList>
            <person name="Zheng H."/>
            <person name="Lu L."/>
            <person name="Wang B."/>
            <person name="Pu S."/>
            <person name="Zhang X."/>
            <person name="Zhu G."/>
            <person name="Shi W."/>
            <person name="Zhang L."/>
            <person name="Wang H."/>
            <person name="Wang S."/>
            <person name="Zhao G."/>
            <person name="Zhang Y."/>
        </authorList>
    </citation>
    <scope>NUCLEOTIDE SEQUENCE [LARGE SCALE GENOMIC DNA]</scope>
    <source>
        <strain>ATCC 25177 / H37Ra</strain>
    </source>
</reference>
<name>PUP_MYCTA</name>
<protein>
    <recommendedName>
        <fullName evidence="1">Prokaryotic ubiquitin-like protein Pup</fullName>
    </recommendedName>
    <alternativeName>
        <fullName evidence="1">Bacterial ubiquitin-like modifier</fullName>
    </alternativeName>
</protein>